<organism evidence="17">
    <name type="scientific">Caenorhabditis elegans</name>
    <dbReference type="NCBI Taxonomy" id="6239"/>
    <lineage>
        <taxon>Eukaryota</taxon>
        <taxon>Metazoa</taxon>
        <taxon>Ecdysozoa</taxon>
        <taxon>Nematoda</taxon>
        <taxon>Chromadorea</taxon>
        <taxon>Rhabditida</taxon>
        <taxon>Rhabditina</taxon>
        <taxon>Rhabditomorpha</taxon>
        <taxon>Rhabditoidea</taxon>
        <taxon>Rhabditidae</taxon>
        <taxon>Peloderinae</taxon>
        <taxon>Caenorhabditis</taxon>
    </lineage>
</organism>
<reference evidence="16" key="1">
    <citation type="journal article" date="1999" name="Science">
        <title>Similarity of the C. elegans developmental timing protein LIN-42 to circadian rhythm proteins.</title>
        <authorList>
            <person name="Jeon M."/>
            <person name="Gardner H.F."/>
            <person name="Miller E.A."/>
            <person name="Deshler J."/>
            <person name="Rougvie A.E."/>
        </authorList>
    </citation>
    <scope>NUCLEOTIDE SEQUENCE [GENOMIC DNA / MRNA] (ISOFORM C)</scope>
    <scope>FUNCTION</scope>
    <scope>SUBCELLULAR LOCATION</scope>
    <scope>DEVELOPMENTAL STAGE</scope>
    <source>
        <strain evidence="16">Bristol N2</strain>
    </source>
</reference>
<reference evidence="18" key="2">
    <citation type="journal article" date="1998" name="Science">
        <title>Genome sequence of the nematode C. elegans: a platform for investigating biology.</title>
        <authorList>
            <consortium name="The C. elegans sequencing consortium"/>
        </authorList>
    </citation>
    <scope>NUCLEOTIDE SEQUENCE [LARGE SCALE GENOMIC DNA]</scope>
    <source>
        <strain evidence="18">Bristol N2</strain>
    </source>
</reference>
<reference evidence="15" key="3">
    <citation type="journal article" date="2005" name="Dev. Cell">
        <title>Developmental timing in C. elegans is regulated by kin-20 and tim-1, homologs of core circadian clock genes.</title>
        <authorList>
            <person name="Banerjee D."/>
            <person name="Kwok A."/>
            <person name="Lin S.-Y."/>
            <person name="Slack F.J."/>
        </authorList>
    </citation>
    <scope>FUNCTION</scope>
    <scope>DISRUPTION PHENOTYPE</scope>
</reference>
<reference evidence="15" key="4">
    <citation type="journal article" date="2006" name="Dev. Biol.">
        <title>Novel heterochronic functions of the Caenorhabditis elegans period-related protein LIN-42.</title>
        <authorList>
            <person name="Tennessen J.M."/>
            <person name="Gardner H.F."/>
            <person name="Volk M.L."/>
            <person name="Rougvie A.E."/>
        </authorList>
    </citation>
    <scope>FUNCTION</scope>
    <scope>SUBCELLULAR LOCATION</scope>
    <scope>DEVELOPMENTAL STAGE</scope>
    <scope>DISRUPTION PHENOTYPE</scope>
    <scope>ALTERNATIVE SPLICING</scope>
</reference>
<reference key="5">
    <citation type="journal article" date="2010" name="Development">
        <title>The C. elegans developmental timing protein LIN-42 regulates diapause in response to environmental cues.</title>
        <authorList>
            <person name="Tennessen J.M."/>
            <person name="Opperman K.J."/>
            <person name="Rougvie A.E."/>
        </authorList>
    </citation>
    <scope>FUNCTION</scope>
    <scope>DEVELOPMENTAL STAGE</scope>
</reference>
<reference key="6">
    <citation type="journal article" date="2011" name="Curr. Biol.">
        <title>LIN-42/PERIOD controls cyclical and developmental progression of C. elegans molts.</title>
        <authorList>
            <person name="Monsalve G.C."/>
            <person name="Van Buskirk C."/>
            <person name="Frand A.R."/>
        </authorList>
    </citation>
    <scope>FUNCTION (ISOFORM A)</scope>
    <scope>DEVELOPMENTAL STAGE</scope>
    <scope>ALTERNATIVE SPLICING</scope>
</reference>
<reference key="7">
    <citation type="journal article" date="2011" name="Development">
        <title>The zinc-finger protein SEA-2 regulates larval developmental timing and adult lifespan in C. elegans.</title>
        <authorList>
            <person name="Huang X."/>
            <person name="Zhang H."/>
            <person name="Zhang H."/>
        </authorList>
    </citation>
    <scope>FUNCTION</scope>
</reference>
<reference key="8">
    <citation type="journal article" date="2014" name="Dev. Biol.">
        <title>The Period protein homolog LIN-42 negatively regulates microRNA biogenesis in C. elegans.</title>
        <authorList>
            <person name="Van Wynsberghe P.M."/>
            <person name="Finnegan E.F."/>
            <person name="Stark T."/>
            <person name="Angelus E.P."/>
            <person name="Homan K.E."/>
            <person name="Yeo G.W."/>
            <person name="Pasquinelli A.E."/>
        </authorList>
    </citation>
    <scope>FUNCTION</scope>
</reference>
<reference key="9">
    <citation type="journal article" date="2014" name="PLoS Genet.">
        <title>LIN-42, the Caenorhabditis elegans PERIOD homolog, negatively regulates microRNA transcription.</title>
        <authorList>
            <person name="Perales R."/>
            <person name="King D.M."/>
            <person name="Aguirre-Chen C."/>
            <person name="Hammell C.M."/>
        </authorList>
    </citation>
    <scope>FUNCTION</scope>
</reference>
<reference key="10">
    <citation type="journal article" date="2014" name="Proc. Natl. Acad. Sci. U.S.A.">
        <title>Caenorhabditis elegans period homolog lin-42 regulates the timing of heterochronic miRNA expression.</title>
        <authorList>
            <person name="McCulloch K.A."/>
            <person name="Rougvie A.E."/>
        </authorList>
    </citation>
    <scope>FUNCTION</scope>
    <scope>DISRUPTION PHENOTYPE</scope>
</reference>
<reference key="11">
    <citation type="journal article" date="2018" name="G3 (Bethesda)">
        <title>The Doubletime Homolog KIN-20 Mainly Regulates let-7 Independently of Its Effects on the Period Homolog LIN-42 in Caenorhabditis elegans.</title>
        <authorList>
            <person name="Rhodehouse K."/>
            <person name="Cascino K."/>
            <person name="Aseltine L."/>
            <person name="Padula A."/>
            <person name="Weinstein R."/>
            <person name="Spina J.S."/>
            <person name="Olivero C.E."/>
            <person name="Van Wynsberghe P.M."/>
        </authorList>
    </citation>
    <scope>FUNCTION</scope>
    <scope>DEVELOPMENTAL STAGE</scope>
    <scope>DISRUPTION PHENOTYPE</scope>
</reference>
<name>PER_CAEEL</name>
<comment type="function">
    <text evidence="2 3 4 5 6 8 9 10 11">Transcriptional repressor which interacts with the promoter region of target genes (PubMed:25032706). Has a specific role in developmental timing where it regulates temporal expression of a number of miRNAs and mRNAs (PubMed:15691769, PubMed:16300753, PubMed:25032706, PubMed:25319259, PubMed:29880558). Controls temporal cell fate transition during embryonic and early larval development by restricting the expression of specific miRNAs, including let-7, miR-48, lin-4, miR-35 and miR-58 (PubMed:15691769, PubMed:24699545, PubMed:25032706, PubMed:25319259, PubMed:29880558). Restricts the accumulation of lin-29 in the hypodermis to the larval L4 stage, thus controlling terminal differentiation of seam cells (PubMed:10550049, PubMed:21471153). Has a role in the miRNA-mediated specification of asymmetric gene expression patterns in gustatory neurons (PubMed:25032706). May also regulate genes involved in other biological processes including transport, small molecule metabolism, and growth (PubMed:25032706). Inhibits dauer formation, by antagonizing daf-12 (PubMed:20843862).</text>
</comment>
<comment type="function">
    <molecule>Isoform a</molecule>
    <text evidence="7">Specifically required for maintaining the timing of larval development and molting cycle rhythms.</text>
</comment>
<comment type="subcellular location">
    <subcellularLocation>
        <location evidence="2 4">Nucleus</location>
    </subcellularLocation>
    <subcellularLocation>
        <location evidence="2">Cytoplasm</location>
    </subcellularLocation>
    <text evidence="2 4">Expression is generally more enriched in the nuclei than the cytoplasm (PubMed:10550049). Cytoplasmic expression is enhanced in lateral seam cells during the molt periods of larval development (PubMed:16300753).</text>
</comment>
<comment type="alternative products">
    <event type="alternative promoter"/>
    <event type="alternative splicing"/>
    <isoform>
        <id>Q65ZG8-1</id>
        <name evidence="20">b</name>
        <name evidence="13">c</name>
        <sequence type="displayed"/>
    </isoform>
    <isoform>
        <id>Q65ZG8-2</id>
        <name evidence="19">a</name>
        <name evidence="13">d</name>
        <sequence type="described" ref="VSP_057503"/>
    </isoform>
    <isoform>
        <id>Q65ZG8-3</id>
        <name evidence="21">c</name>
        <name evidence="13">a</name>
        <sequence type="described" ref="VSP_057504 VSP_057505"/>
    </isoform>
    <text evidence="13">Additional isoforms seem to exist.</text>
</comment>
<comment type="developmental stage">
    <text evidence="2 4 5 7 11">Expressed from late embryonic stage onwards (PubMed:10550049, PubMed:16300753). Shows oscillating expression levels during larval stages, with peak levels in intermolt periods and minimal levels during ecdysis (PubMed:16300753, PubMed:20843862, PubMed:22137474, PubMed:29880558). Expressed in hypodermis, vulva, intestine, muscle, neurons and somatic gonad throughout larval development, in an oscillating pattern (PubMed:16300753, PubMed:22137474). Expressed in sex myoblasts during larval stages L1, L2 and L3, in an oscillating pattern (PubMed:16300753). Expressed in gonad distal tip cells (DTC) during the L2 and L3 stages, in an oscillating pattern (PubMed:16300753).</text>
</comment>
<comment type="developmental stage">
    <molecule>Isoform a</molecule>
    <text evidence="7">Expressed in the pharyngeal myoepithelium, the major body hypodermal syncytium and lateral seam cells from the mid L1 stage. Expression in the hypodermis rises and falls at the start and end of every molt, respectively.</text>
</comment>
<comment type="disruption phenotype">
    <text evidence="3 4 10 11">Mutants exhibit a delay in development characterized by a strong molting defect, resulting in a prolonged L1 stage followed by an arrest in development in the L2 stage in most animals (PubMed:25319259). There is increased expression of the heterochronic miRNAs, lin-4 and miR-48, in late L1 (PubMed:25319259). In addition, there is increased expression of the heterochronic miRNA let-7 at the L3 and L4 larval stages (PubMed:29880558). Seam cell shape and connectivity is severely abnormal during the molt stages (PubMed:22137474). Animals display a precocious alae phenotype, with the early formation of either full or partial alae in the adult cuticle (PubMed:25319259, PubMed:29880558). The precocious alae phenotype is suppressed in the double lin-42 and let-7 mutant and lin-42 and miR-48 mutant (PubMed:25319259). The quadruple lin-42, miR-48, miR-241 and let-7 mutant has a retarded phenotype at L4, with many animals having few full and partial alae or none (PubMed:25319259). The number of animals displaying a squat body statue, referred to as a dumpy phenotype, is increased, the incomplete alae formation defect is rescued and increased let-7 levels are reduced in a kin-20 RNAi-mediated knockdown mutant background (PubMed:29880558). RNAi-mediated knockdown leads to a severe hypodermal phenotype, premature execution of developmental events in vulval precursor cells, DTC and sex myoblasts (PubMed:16300753). Furthermore, seam cell terminal differentiation is only partially initiated at the L4 larval stage (PubMed:15691769). RNAi-mediated knockdown increases the survival rate and partially restores alae formation of let-7 n2853 mutants at 20 degrees Celsius (PubMed:15691769).</text>
</comment>
<comment type="miscellaneous">
    <molecule>Isoform a</molecule>
    <text evidence="12 14">Produced by alternative promoter usage.</text>
</comment>
<comment type="miscellaneous">
    <molecule>Isoform c</molecule>
    <text evidence="14">Produced by alternative splicing.</text>
</comment>
<keyword id="KW-0002">3D-structure</keyword>
<keyword id="KW-0877">Alternative promoter usage</keyword>
<keyword id="KW-0025">Alternative splicing</keyword>
<keyword id="KW-0963">Cytoplasm</keyword>
<keyword id="KW-0217">Developmental protein</keyword>
<keyword id="KW-0221">Differentiation</keyword>
<keyword id="KW-0539">Nucleus</keyword>
<keyword id="KW-1185">Reference proteome</keyword>
<keyword id="KW-0804">Transcription</keyword>
<keyword id="KW-0805">Transcription regulation</keyword>
<feature type="chain" id="PRO_0000432385" description="Period protein homolog lin-42">
    <location>
        <begin position="1"/>
        <end position="597"/>
    </location>
</feature>
<feature type="domain" description="PAS" evidence="15">
    <location>
        <begin position="155"/>
        <end position="223"/>
    </location>
</feature>
<feature type="region of interest" description="Disordered" evidence="1">
    <location>
        <begin position="1"/>
        <end position="44"/>
    </location>
</feature>
<feature type="region of interest" description="Disordered" evidence="1">
    <location>
        <begin position="313"/>
        <end position="335"/>
    </location>
</feature>
<feature type="region of interest" description="Disordered" evidence="1">
    <location>
        <begin position="418"/>
        <end position="450"/>
    </location>
</feature>
<feature type="region of interest" description="Disordered" evidence="1">
    <location>
        <begin position="473"/>
        <end position="509"/>
    </location>
</feature>
<feature type="region of interest" description="Disordered" evidence="1">
    <location>
        <begin position="555"/>
        <end position="597"/>
    </location>
</feature>
<feature type="compositionally biased region" description="Basic and acidic residues" evidence="1">
    <location>
        <begin position="425"/>
        <end position="438"/>
    </location>
</feature>
<feature type="compositionally biased region" description="Polar residues" evidence="1">
    <location>
        <begin position="487"/>
        <end position="497"/>
    </location>
</feature>
<feature type="compositionally biased region" description="Low complexity" evidence="1">
    <location>
        <begin position="561"/>
        <end position="577"/>
    </location>
</feature>
<feature type="splice variant" id="VSP_057503" description="In isoform a.">
    <original>MEPAGHSSATHNIVVPNANPTQPQPLAPAMREEGATLSPPNTWSSSSVEFLDDADDNRLLFTCTFTLPHGTVLSSATYADGFHEQYLTIGDNFLARLEPKGQSFILSAAAASVKQRIFARVTMPDGALRACELLCEFETDRAKITVLALRSAFSLQASHVSSNFHVFTFITKHSSTCALTHIDYASIPYLGLLPTDLIGKSLLAFVYSPDVHVVRQAHIDLHNSRGKIVKSIADLRLVAHNGSILRCQTEWSAYVNPWTRKMELVVARHRICSLPIGDSDVISSPPPGIQSNTLPPVMAKTFEDELRTIMNK</original>
    <variation>MDILSYLYDLAE</variation>
    <location>
        <begin position="1"/>
        <end position="312"/>
    </location>
</feature>
<feature type="splice variant" id="VSP_057504" description="In isoform c.">
    <original>PVPSTSRHSHHHHHSSLKDQNQGFPANIDLGAYIDKIVEQLVVNSTAQQQQKVAVAAAAAAQAAQAAVVATAQIRKVASAPPTTSTDPPLSYTQINCLENVHRLLKSQSRPESPAKQDEPFDEKKYPPQTPLTREALTLHT</original>
    <variation>VSSAISSVTFLSSGDGASHRLSSSSVLLVLTLHFYLCASLRRDTRLARRIRRRESGQQRHLSEQKVHMLALRSMAPCQEKECKNDALAGGAVSGTTDELIPRRTFLEFAWNGECNFIGGPVLYGSRRDMVQVLQKPTKLKS</variation>
    <location>
        <begin position="313"/>
        <end position="453"/>
    </location>
</feature>
<feature type="splice variant" id="VSP_057505" description="In isoform c.">
    <location>
        <begin position="454"/>
        <end position="597"/>
    </location>
</feature>
<feature type="helix" evidence="22">
    <location>
        <begin position="152"/>
        <end position="155"/>
    </location>
</feature>
<feature type="turn" evidence="22">
    <location>
        <begin position="156"/>
        <end position="158"/>
    </location>
</feature>
<feature type="strand" evidence="22">
    <location>
        <begin position="168"/>
        <end position="174"/>
    </location>
</feature>
<feature type="strand" evidence="22">
    <location>
        <begin position="179"/>
        <end position="182"/>
    </location>
</feature>
<feature type="helix" evidence="22">
    <location>
        <begin position="184"/>
        <end position="186"/>
    </location>
</feature>
<feature type="helix" evidence="22">
    <location>
        <begin position="187"/>
        <end position="190"/>
    </location>
</feature>
<feature type="helix" evidence="22">
    <location>
        <begin position="194"/>
        <end position="197"/>
    </location>
</feature>
<feature type="helix" evidence="22">
    <location>
        <begin position="202"/>
        <end position="204"/>
    </location>
</feature>
<feature type="helix" evidence="22">
    <location>
        <begin position="208"/>
        <end position="210"/>
    </location>
</feature>
<feature type="helix" evidence="22">
    <location>
        <begin position="211"/>
        <end position="224"/>
    </location>
</feature>
<feature type="strand" evidence="22">
    <location>
        <begin position="235"/>
        <end position="238"/>
    </location>
</feature>
<feature type="strand" evidence="22">
    <location>
        <begin position="244"/>
        <end position="255"/>
    </location>
</feature>
<feature type="turn" evidence="22">
    <location>
        <begin position="257"/>
        <end position="259"/>
    </location>
</feature>
<feature type="strand" evidence="22">
    <location>
        <begin position="261"/>
        <end position="274"/>
    </location>
</feature>
<feature type="helix" evidence="22">
    <location>
        <begin position="296"/>
        <end position="310"/>
    </location>
</feature>
<evidence type="ECO:0000256" key="1">
    <source>
        <dbReference type="SAM" id="MobiDB-lite"/>
    </source>
</evidence>
<evidence type="ECO:0000269" key="2">
    <source>
    </source>
</evidence>
<evidence type="ECO:0000269" key="3">
    <source>
    </source>
</evidence>
<evidence type="ECO:0000269" key="4">
    <source>
    </source>
</evidence>
<evidence type="ECO:0000269" key="5">
    <source>
    </source>
</evidence>
<evidence type="ECO:0000269" key="6">
    <source>
    </source>
</evidence>
<evidence type="ECO:0000269" key="7">
    <source>
    </source>
</evidence>
<evidence type="ECO:0000269" key="8">
    <source>
    </source>
</evidence>
<evidence type="ECO:0000269" key="9">
    <source>
    </source>
</evidence>
<evidence type="ECO:0000269" key="10">
    <source>
    </source>
</evidence>
<evidence type="ECO:0000269" key="11">
    <source>
    </source>
</evidence>
<evidence type="ECO:0000303" key="12">
    <source>
    </source>
</evidence>
<evidence type="ECO:0000303" key="13">
    <source>
    </source>
</evidence>
<evidence type="ECO:0000303" key="14">
    <source>
    </source>
</evidence>
<evidence type="ECO:0000305" key="15"/>
<evidence type="ECO:0000312" key="16">
    <source>
        <dbReference type="EMBL" id="AAF13188.1"/>
    </source>
</evidence>
<evidence type="ECO:0000312" key="17">
    <source>
        <dbReference type="EMBL" id="CCD71436.1"/>
    </source>
</evidence>
<evidence type="ECO:0000312" key="18">
    <source>
        <dbReference type="Proteomes" id="UP000001940"/>
    </source>
</evidence>
<evidence type="ECO:0000312" key="19">
    <source>
        <dbReference type="WormBase" id="F47F6.1a"/>
    </source>
</evidence>
<evidence type="ECO:0000312" key="20">
    <source>
        <dbReference type="WormBase" id="F47F6.1b"/>
    </source>
</evidence>
<evidence type="ECO:0000312" key="21">
    <source>
        <dbReference type="WormBase" id="F47F6.1c"/>
    </source>
</evidence>
<evidence type="ECO:0007829" key="22">
    <source>
        <dbReference type="PDB" id="8GCI"/>
    </source>
</evidence>
<proteinExistence type="evidence at protein level"/>
<sequence>MEPAGHSSATHNIVVPNANPTQPQPLAPAMREEGATLSPPNTWSSSSVEFLDDADDNRLLFTCTFTLPHGTVLSSATYADGFHEQYLTIGDNFLARLEPKGQSFILSAAAASVKQRIFARVTMPDGALRACELLCEFETDRAKITVLALRSAFSLQASHVSSNFHVFTFITKHSSTCALTHIDYASIPYLGLLPTDLIGKSLLAFVYSPDVHVVRQAHIDLHNSRGKIVKSIADLRLVAHNGSILRCQTEWSAYVNPWTRKMELVVARHRICSLPIGDSDVISSPPPGIQSNTLPPVMAKTFEDELRTIMNKPVPSTSRHSHHHHHSSLKDQNQGFPANIDLGAYIDKIVEQLVVNSTAQQQQKVAVAAAAAAQAAQAAVVATAQIRKVASAPPTTSTDPPLSYTQINCLENVHRLLKSQSRPESPAKQDEPFDEKKYPPQTPLTREALTLHTKRFEDEYKDTWCRRLKRLSDDVPSSPPAKRTTPIHWTSSSQNHYRTMAPAPPPPPGKNYQITYTPLDDLTDQKSTNTKSDVENVAYPISGSKFSTPMRLSIDGLLPRGATSTGGASPTSGTNSPPVFPKTSSSSSLLMLRDSQN</sequence>
<protein>
    <recommendedName>
        <fullName evidence="15">Period protein homolog lin-42</fullName>
    </recommendedName>
    <alternativeName>
        <fullName evidence="20">Abnormal cell lineage protein 42</fullName>
    </alternativeName>
</protein>
<dbReference type="EMBL" id="AF183400">
    <property type="protein sequence ID" value="AAF13188.1"/>
    <property type="molecule type" value="mRNA"/>
</dbReference>
<dbReference type="EMBL" id="BX284602">
    <property type="protein sequence ID" value="CCD71436.1"/>
    <property type="molecule type" value="Genomic_DNA"/>
</dbReference>
<dbReference type="EMBL" id="BX284602">
    <property type="protein sequence ID" value="CCD71435.1"/>
    <property type="molecule type" value="Genomic_DNA"/>
</dbReference>
<dbReference type="EMBL" id="BX284602">
    <property type="protein sequence ID" value="CCD71437.1"/>
    <property type="molecule type" value="Genomic_DNA"/>
</dbReference>
<dbReference type="PIR" id="B88040">
    <property type="entry name" value="B88040"/>
</dbReference>
<dbReference type="RefSeq" id="NP_001022176.1">
    <molecule id="Q65ZG8-2"/>
    <property type="nucleotide sequence ID" value="NM_001027005.4"/>
</dbReference>
<dbReference type="RefSeq" id="NP_001022177.1">
    <molecule id="Q65ZG8-1"/>
    <property type="nucleotide sequence ID" value="NM_001027006.7"/>
</dbReference>
<dbReference type="RefSeq" id="NP_001022178.1">
    <molecule id="Q65ZG8-3"/>
    <property type="nucleotide sequence ID" value="NM_001027007.3"/>
</dbReference>
<dbReference type="PDB" id="8GCI">
    <property type="method" value="X-ray"/>
    <property type="resolution" value="2.42 A"/>
    <property type="chains" value="A=41-315"/>
</dbReference>
<dbReference type="PDBsum" id="8GCI"/>
<dbReference type="SMR" id="Q65ZG8"/>
<dbReference type="DIP" id="DIP-25313N"/>
<dbReference type="FunCoup" id="Q65ZG8">
    <property type="interactions" value="306"/>
</dbReference>
<dbReference type="IntAct" id="Q65ZG8">
    <property type="interactions" value="1"/>
</dbReference>
<dbReference type="STRING" id="6239.F47F6.1d.1"/>
<dbReference type="PaxDb" id="6239-F47F6.1b"/>
<dbReference type="PeptideAtlas" id="Q65ZG8"/>
<dbReference type="EnsemblMetazoa" id="F47F6.1a.1">
    <molecule id="Q65ZG8-2"/>
    <property type="protein sequence ID" value="F47F6.1a.1"/>
    <property type="gene ID" value="WBGene00018572"/>
</dbReference>
<dbReference type="EnsemblMetazoa" id="F47F6.1b.1">
    <molecule id="Q65ZG8-1"/>
    <property type="protein sequence ID" value="F47F6.1b.1"/>
    <property type="gene ID" value="WBGene00018572"/>
</dbReference>
<dbReference type="EnsemblMetazoa" id="F47F6.1c.1">
    <molecule id="Q65ZG8-3"/>
    <property type="protein sequence ID" value="F47F6.1c.1"/>
    <property type="gene ID" value="WBGene00018572"/>
</dbReference>
<dbReference type="GeneID" id="173503"/>
<dbReference type="KEGG" id="cel:CELE_F47F6.1"/>
<dbReference type="UCSC" id="F47F6.1b">
    <property type="organism name" value="c. elegans"/>
</dbReference>
<dbReference type="AGR" id="WB:WBGene00018572"/>
<dbReference type="CTD" id="173503"/>
<dbReference type="WormBase" id="F47F6.1a">
    <molecule id="Q65ZG8-2"/>
    <property type="protein sequence ID" value="CE29325"/>
    <property type="gene ID" value="WBGene00018572"/>
    <property type="gene designation" value="lin-42"/>
</dbReference>
<dbReference type="WormBase" id="F47F6.1b">
    <molecule id="Q65ZG8-1"/>
    <property type="protein sequence ID" value="CE37237"/>
    <property type="gene ID" value="WBGene00018572"/>
    <property type="gene designation" value="lin-42"/>
</dbReference>
<dbReference type="WormBase" id="F47F6.1c">
    <molecule id="Q65ZG8-3"/>
    <property type="protein sequence ID" value="CE10706"/>
    <property type="gene ID" value="WBGene00018572"/>
    <property type="gene designation" value="lin-42"/>
</dbReference>
<dbReference type="eggNOG" id="KOG3753">
    <property type="taxonomic scope" value="Eukaryota"/>
</dbReference>
<dbReference type="GeneTree" id="ENSGT00940000174107"/>
<dbReference type="HOGENOM" id="CLU_432276_0_0_1"/>
<dbReference type="InParanoid" id="Q65ZG8"/>
<dbReference type="OMA" id="YYRTMAP"/>
<dbReference type="OrthoDB" id="7788983at2759"/>
<dbReference type="SignaLink" id="Q65ZG8"/>
<dbReference type="PRO" id="PR:Q65ZG8"/>
<dbReference type="Proteomes" id="UP000001940">
    <property type="component" value="Chromosome II"/>
</dbReference>
<dbReference type="Bgee" id="WBGene00018572">
    <property type="expression patterns" value="Expressed in pharyngeal muscle cell (C elegans) and 3 other cell types or tissues"/>
</dbReference>
<dbReference type="ExpressionAtlas" id="Q65ZG8">
    <property type="expression patterns" value="baseline and differential"/>
</dbReference>
<dbReference type="GO" id="GO:0005737">
    <property type="term" value="C:cytoplasm"/>
    <property type="evidence" value="ECO:0000314"/>
    <property type="project" value="WormBase"/>
</dbReference>
<dbReference type="GO" id="GO:0005634">
    <property type="term" value="C:nucleus"/>
    <property type="evidence" value="ECO:0000314"/>
    <property type="project" value="WormBase"/>
</dbReference>
<dbReference type="GO" id="GO:0061629">
    <property type="term" value="F:RNA polymerase II-specific DNA-binding transcription factor binding"/>
    <property type="evidence" value="ECO:0000353"/>
    <property type="project" value="WormBase"/>
</dbReference>
<dbReference type="GO" id="GO:0030154">
    <property type="term" value="P:cell differentiation"/>
    <property type="evidence" value="ECO:0007669"/>
    <property type="project" value="UniProtKB-KW"/>
</dbReference>
<dbReference type="GO" id="GO:0061067">
    <property type="term" value="P:negative regulation of dauer larval development"/>
    <property type="evidence" value="ECO:0000315"/>
    <property type="project" value="WormBase"/>
</dbReference>
<dbReference type="GO" id="GO:1902894">
    <property type="term" value="P:negative regulation of miRNA transcription"/>
    <property type="evidence" value="ECO:0000315"/>
    <property type="project" value="WormBase"/>
</dbReference>
<dbReference type="GO" id="GO:0040034">
    <property type="term" value="P:regulation of development, heterochronic"/>
    <property type="evidence" value="ECO:0000315"/>
    <property type="project" value="WormBase"/>
</dbReference>
<dbReference type="CDD" id="cd00130">
    <property type="entry name" value="PAS"/>
    <property type="match status" value="1"/>
</dbReference>
<dbReference type="Gene3D" id="3.30.450.20">
    <property type="entry name" value="PAS domain"/>
    <property type="match status" value="1"/>
</dbReference>
<dbReference type="InterPro" id="IPR000014">
    <property type="entry name" value="PAS"/>
</dbReference>
<dbReference type="InterPro" id="IPR035965">
    <property type="entry name" value="PAS-like_dom_sf"/>
</dbReference>
<dbReference type="InterPro" id="IPR050760">
    <property type="entry name" value="Period_circadian_regulator"/>
</dbReference>
<dbReference type="PANTHER" id="PTHR11269">
    <property type="entry name" value="PERIOD CIRCADIAN PROTEIN"/>
    <property type="match status" value="1"/>
</dbReference>
<dbReference type="PANTHER" id="PTHR11269:SF16">
    <property type="entry name" value="PERIOD CIRCADIAN PROTEIN"/>
    <property type="match status" value="1"/>
</dbReference>
<dbReference type="Pfam" id="PF14598">
    <property type="entry name" value="PAS_11"/>
    <property type="match status" value="1"/>
</dbReference>
<dbReference type="SMART" id="SM00091">
    <property type="entry name" value="PAS"/>
    <property type="match status" value="1"/>
</dbReference>
<dbReference type="SUPFAM" id="SSF55785">
    <property type="entry name" value="PYP-like sensor domain (PAS domain)"/>
    <property type="match status" value="1"/>
</dbReference>
<accession>Q65ZG8</accession>
<accession>H2L053</accession>
<accession>P91313</accession>
<gene>
    <name evidence="20" type="primary">lin-42</name>
    <name evidence="20" type="ORF">F47F6.1</name>
</gene>